<organism>
    <name type="scientific">Yersinia pestis bv. Antiqua (strain Antiqua)</name>
    <dbReference type="NCBI Taxonomy" id="360102"/>
    <lineage>
        <taxon>Bacteria</taxon>
        <taxon>Pseudomonadati</taxon>
        <taxon>Pseudomonadota</taxon>
        <taxon>Gammaproteobacteria</taxon>
        <taxon>Enterobacterales</taxon>
        <taxon>Yersiniaceae</taxon>
        <taxon>Yersinia</taxon>
    </lineage>
</organism>
<reference key="1">
    <citation type="journal article" date="2006" name="J. Bacteriol.">
        <title>Complete genome sequence of Yersinia pestis strains Antiqua and Nepal516: evidence of gene reduction in an emerging pathogen.</title>
        <authorList>
            <person name="Chain P.S.G."/>
            <person name="Hu P."/>
            <person name="Malfatti S.A."/>
            <person name="Radnedge L."/>
            <person name="Larimer F."/>
            <person name="Vergez L.M."/>
            <person name="Worsham P."/>
            <person name="Chu M.C."/>
            <person name="Andersen G.L."/>
        </authorList>
    </citation>
    <scope>NUCLEOTIDE SEQUENCE [LARGE SCALE GENOMIC DNA]</scope>
    <source>
        <strain>Antiqua</strain>
    </source>
</reference>
<proteinExistence type="inferred from homology"/>
<evidence type="ECO:0000255" key="1">
    <source>
        <dbReference type="HAMAP-Rule" id="MF_01633"/>
    </source>
</evidence>
<feature type="chain" id="PRO_0000255930" description="7-cyano-7-deazaguanine synthase">
    <location>
        <begin position="1"/>
        <end position="232"/>
    </location>
</feature>
<feature type="binding site" evidence="1">
    <location>
        <begin position="8"/>
        <end position="18"/>
    </location>
    <ligand>
        <name>ATP</name>
        <dbReference type="ChEBI" id="CHEBI:30616"/>
    </ligand>
</feature>
<feature type="binding site" evidence="1">
    <location>
        <position position="189"/>
    </location>
    <ligand>
        <name>Zn(2+)</name>
        <dbReference type="ChEBI" id="CHEBI:29105"/>
    </ligand>
</feature>
<feature type="binding site" evidence="1">
    <location>
        <position position="198"/>
    </location>
    <ligand>
        <name>Zn(2+)</name>
        <dbReference type="ChEBI" id="CHEBI:29105"/>
    </ligand>
</feature>
<feature type="binding site" evidence="1">
    <location>
        <position position="201"/>
    </location>
    <ligand>
        <name>Zn(2+)</name>
        <dbReference type="ChEBI" id="CHEBI:29105"/>
    </ligand>
</feature>
<feature type="binding site" evidence="1">
    <location>
        <position position="204"/>
    </location>
    <ligand>
        <name>Zn(2+)</name>
        <dbReference type="ChEBI" id="CHEBI:29105"/>
    </ligand>
</feature>
<accession>Q1C4L5</accession>
<comment type="function">
    <text evidence="1">Catalyzes the ATP-dependent conversion of 7-carboxy-7-deazaguanine (CDG) to 7-cyano-7-deazaguanine (preQ(0)).</text>
</comment>
<comment type="catalytic activity">
    <reaction evidence="1">
        <text>7-carboxy-7-deazaguanine + NH4(+) + ATP = 7-cyano-7-deazaguanine + ADP + phosphate + H2O + H(+)</text>
        <dbReference type="Rhea" id="RHEA:27982"/>
        <dbReference type="ChEBI" id="CHEBI:15377"/>
        <dbReference type="ChEBI" id="CHEBI:15378"/>
        <dbReference type="ChEBI" id="CHEBI:28938"/>
        <dbReference type="ChEBI" id="CHEBI:30616"/>
        <dbReference type="ChEBI" id="CHEBI:43474"/>
        <dbReference type="ChEBI" id="CHEBI:45075"/>
        <dbReference type="ChEBI" id="CHEBI:61036"/>
        <dbReference type="ChEBI" id="CHEBI:456216"/>
        <dbReference type="EC" id="6.3.4.20"/>
    </reaction>
</comment>
<comment type="cofactor">
    <cofactor evidence="1">
        <name>Zn(2+)</name>
        <dbReference type="ChEBI" id="CHEBI:29105"/>
    </cofactor>
    <text evidence="1">Binds 1 zinc ion per subunit.</text>
</comment>
<comment type="pathway">
    <text evidence="1">Purine metabolism; 7-cyano-7-deazaguanine biosynthesis.</text>
</comment>
<comment type="similarity">
    <text evidence="1">Belongs to the QueC family.</text>
</comment>
<dbReference type="EC" id="6.3.4.20" evidence="1"/>
<dbReference type="EMBL" id="CP000308">
    <property type="protein sequence ID" value="ABG14607.1"/>
    <property type="molecule type" value="Genomic_DNA"/>
</dbReference>
<dbReference type="RefSeq" id="WP_002208635.1">
    <property type="nucleotide sequence ID" value="NZ_CP009906.1"/>
</dbReference>
<dbReference type="SMR" id="Q1C4L5"/>
<dbReference type="GeneID" id="57975561"/>
<dbReference type="KEGG" id="ypa:YPA_2645"/>
<dbReference type="UniPathway" id="UPA00391"/>
<dbReference type="Proteomes" id="UP000001971">
    <property type="component" value="Chromosome"/>
</dbReference>
<dbReference type="GO" id="GO:0005524">
    <property type="term" value="F:ATP binding"/>
    <property type="evidence" value="ECO:0007669"/>
    <property type="project" value="UniProtKB-UniRule"/>
</dbReference>
<dbReference type="GO" id="GO:0016879">
    <property type="term" value="F:ligase activity, forming carbon-nitrogen bonds"/>
    <property type="evidence" value="ECO:0007669"/>
    <property type="project" value="UniProtKB-UniRule"/>
</dbReference>
<dbReference type="GO" id="GO:0008270">
    <property type="term" value="F:zinc ion binding"/>
    <property type="evidence" value="ECO:0007669"/>
    <property type="project" value="UniProtKB-UniRule"/>
</dbReference>
<dbReference type="GO" id="GO:0008616">
    <property type="term" value="P:queuosine biosynthetic process"/>
    <property type="evidence" value="ECO:0007669"/>
    <property type="project" value="UniProtKB-UniRule"/>
</dbReference>
<dbReference type="CDD" id="cd01995">
    <property type="entry name" value="QueC-like"/>
    <property type="match status" value="1"/>
</dbReference>
<dbReference type="FunFam" id="3.40.50.620:FF:000017">
    <property type="entry name" value="7-cyano-7-deazaguanine synthase"/>
    <property type="match status" value="1"/>
</dbReference>
<dbReference type="Gene3D" id="3.40.50.620">
    <property type="entry name" value="HUPs"/>
    <property type="match status" value="1"/>
</dbReference>
<dbReference type="HAMAP" id="MF_01633">
    <property type="entry name" value="QueC"/>
    <property type="match status" value="1"/>
</dbReference>
<dbReference type="InterPro" id="IPR018317">
    <property type="entry name" value="QueC"/>
</dbReference>
<dbReference type="InterPro" id="IPR014729">
    <property type="entry name" value="Rossmann-like_a/b/a_fold"/>
</dbReference>
<dbReference type="NCBIfam" id="TIGR00364">
    <property type="entry name" value="7-cyano-7-deazaguanine synthase QueC"/>
    <property type="match status" value="1"/>
</dbReference>
<dbReference type="NCBIfam" id="NF008317">
    <property type="entry name" value="PRK11106.1"/>
    <property type="match status" value="1"/>
</dbReference>
<dbReference type="PANTHER" id="PTHR42914">
    <property type="entry name" value="7-CYANO-7-DEAZAGUANINE SYNTHASE"/>
    <property type="match status" value="1"/>
</dbReference>
<dbReference type="PANTHER" id="PTHR42914:SF1">
    <property type="entry name" value="7-CYANO-7-DEAZAGUANINE SYNTHASE"/>
    <property type="match status" value="1"/>
</dbReference>
<dbReference type="Pfam" id="PF06508">
    <property type="entry name" value="QueC"/>
    <property type="match status" value="1"/>
</dbReference>
<dbReference type="PIRSF" id="PIRSF006293">
    <property type="entry name" value="ExsB"/>
    <property type="match status" value="1"/>
</dbReference>
<dbReference type="SUPFAM" id="SSF52402">
    <property type="entry name" value="Adenine nucleotide alpha hydrolases-like"/>
    <property type="match status" value="1"/>
</dbReference>
<sequence>MKRAVVVFSGGQDSTTCLIQALQQYDEVHCITFDYGQRHRTEIDVARELALQLGATAHKVLDVGMLNELAVSSLTRDSIPVPSYDANADGALPSTFVPGRNILFLTLASIYAYQVQAQAVITGVCETDFSGYPDCRDEFIKALNHAIDLGIGRDIAFITPLMWLDKAETWALADYYQQLDLIRHHTLTCYNGIKGDGCGQCAACHLRAKGLASYMANKQQVILNLKQKVGLA</sequence>
<name>QUEC_YERPA</name>
<gene>
    <name evidence="1" type="primary">queC</name>
    <name type="ordered locus">YPA_2645</name>
</gene>
<protein>
    <recommendedName>
        <fullName evidence="1">7-cyano-7-deazaguanine synthase</fullName>
        <ecNumber evidence="1">6.3.4.20</ecNumber>
    </recommendedName>
    <alternativeName>
        <fullName evidence="1">7-cyano-7-carbaguanine synthase</fullName>
    </alternativeName>
    <alternativeName>
        <fullName evidence="1">PreQ(0) synthase</fullName>
    </alternativeName>
    <alternativeName>
        <fullName evidence="1">Queuosine biosynthesis protein QueC</fullName>
    </alternativeName>
</protein>
<keyword id="KW-0067">ATP-binding</keyword>
<keyword id="KW-0436">Ligase</keyword>
<keyword id="KW-0479">Metal-binding</keyword>
<keyword id="KW-0547">Nucleotide-binding</keyword>
<keyword id="KW-0671">Queuosine biosynthesis</keyword>
<keyword id="KW-0862">Zinc</keyword>